<reference key="1">
    <citation type="journal article" date="2000" name="DNA Res.">
        <title>Complete genome structure of the nitrogen-fixing symbiotic bacterium Mesorhizobium loti.</title>
        <authorList>
            <person name="Kaneko T."/>
            <person name="Nakamura Y."/>
            <person name="Sato S."/>
            <person name="Asamizu E."/>
            <person name="Kato T."/>
            <person name="Sasamoto S."/>
            <person name="Watanabe A."/>
            <person name="Idesawa K."/>
            <person name="Ishikawa A."/>
            <person name="Kawashima K."/>
            <person name="Kimura T."/>
            <person name="Kishida Y."/>
            <person name="Kiyokawa C."/>
            <person name="Kohara M."/>
            <person name="Matsumoto M."/>
            <person name="Matsuno A."/>
            <person name="Mochizuki Y."/>
            <person name="Nakayama S."/>
            <person name="Nakazaki N."/>
            <person name="Shimpo S."/>
            <person name="Sugimoto M."/>
            <person name="Takeuchi C."/>
            <person name="Yamada M."/>
            <person name="Tabata S."/>
        </authorList>
    </citation>
    <scope>NUCLEOTIDE SEQUENCE [LARGE SCALE GENOMIC DNA]</scope>
    <source>
        <strain>LMG 29417 / CECT 9101 / MAFF 303099</strain>
    </source>
</reference>
<name>RS20_RHILO</name>
<accession>Q98BG8</accession>
<sequence>MANTSSAKKATRKIARRAAINKNRRSRVRTYVRQVEEALASGDKAAAQAAFKAAEPELMRAATKGVIHKNTASRKVSRLAARLKVLSA</sequence>
<dbReference type="EMBL" id="BA000012">
    <property type="protein sequence ID" value="BAB52004.1"/>
    <property type="molecule type" value="Genomic_DNA"/>
</dbReference>
<dbReference type="RefSeq" id="WP_010913342.1">
    <property type="nucleotide sequence ID" value="NC_002678.2"/>
</dbReference>
<dbReference type="SMR" id="Q98BG8"/>
<dbReference type="GeneID" id="66686577"/>
<dbReference type="KEGG" id="mlo:mll5582"/>
<dbReference type="eggNOG" id="COG0268">
    <property type="taxonomic scope" value="Bacteria"/>
</dbReference>
<dbReference type="HOGENOM" id="CLU_160655_3_0_5"/>
<dbReference type="Proteomes" id="UP000000552">
    <property type="component" value="Chromosome"/>
</dbReference>
<dbReference type="GO" id="GO:0005829">
    <property type="term" value="C:cytosol"/>
    <property type="evidence" value="ECO:0007669"/>
    <property type="project" value="TreeGrafter"/>
</dbReference>
<dbReference type="GO" id="GO:0015935">
    <property type="term" value="C:small ribosomal subunit"/>
    <property type="evidence" value="ECO:0007669"/>
    <property type="project" value="TreeGrafter"/>
</dbReference>
<dbReference type="GO" id="GO:0070181">
    <property type="term" value="F:small ribosomal subunit rRNA binding"/>
    <property type="evidence" value="ECO:0007669"/>
    <property type="project" value="TreeGrafter"/>
</dbReference>
<dbReference type="GO" id="GO:0003735">
    <property type="term" value="F:structural constituent of ribosome"/>
    <property type="evidence" value="ECO:0007669"/>
    <property type="project" value="InterPro"/>
</dbReference>
<dbReference type="GO" id="GO:0006412">
    <property type="term" value="P:translation"/>
    <property type="evidence" value="ECO:0007669"/>
    <property type="project" value="UniProtKB-UniRule"/>
</dbReference>
<dbReference type="FunFam" id="1.20.58.110:FF:000001">
    <property type="entry name" value="30S ribosomal protein S20"/>
    <property type="match status" value="1"/>
</dbReference>
<dbReference type="Gene3D" id="1.20.58.110">
    <property type="entry name" value="Ribosomal protein S20"/>
    <property type="match status" value="1"/>
</dbReference>
<dbReference type="HAMAP" id="MF_00500">
    <property type="entry name" value="Ribosomal_bS20"/>
    <property type="match status" value="1"/>
</dbReference>
<dbReference type="InterPro" id="IPR002583">
    <property type="entry name" value="Ribosomal_bS20"/>
</dbReference>
<dbReference type="InterPro" id="IPR036510">
    <property type="entry name" value="Ribosomal_bS20_sf"/>
</dbReference>
<dbReference type="NCBIfam" id="TIGR00029">
    <property type="entry name" value="S20"/>
    <property type="match status" value="1"/>
</dbReference>
<dbReference type="PANTHER" id="PTHR33398">
    <property type="entry name" value="30S RIBOSOMAL PROTEIN S20"/>
    <property type="match status" value="1"/>
</dbReference>
<dbReference type="PANTHER" id="PTHR33398:SF1">
    <property type="entry name" value="SMALL RIBOSOMAL SUBUNIT PROTEIN BS20C"/>
    <property type="match status" value="1"/>
</dbReference>
<dbReference type="Pfam" id="PF01649">
    <property type="entry name" value="Ribosomal_S20p"/>
    <property type="match status" value="1"/>
</dbReference>
<dbReference type="SUPFAM" id="SSF46992">
    <property type="entry name" value="Ribosomal protein S20"/>
    <property type="match status" value="1"/>
</dbReference>
<evidence type="ECO:0000255" key="1">
    <source>
        <dbReference type="HAMAP-Rule" id="MF_00500"/>
    </source>
</evidence>
<evidence type="ECO:0000256" key="2">
    <source>
        <dbReference type="SAM" id="MobiDB-lite"/>
    </source>
</evidence>
<evidence type="ECO:0000305" key="3"/>
<proteinExistence type="inferred from homology"/>
<gene>
    <name evidence="1" type="primary">rpsT</name>
    <name type="ordered locus">mll5582</name>
</gene>
<comment type="function">
    <text evidence="1">Binds directly to 16S ribosomal RNA.</text>
</comment>
<comment type="similarity">
    <text evidence="1">Belongs to the bacterial ribosomal protein bS20 family.</text>
</comment>
<feature type="chain" id="PRO_0000168018" description="Small ribosomal subunit protein bS20">
    <location>
        <begin position="1"/>
        <end position="88"/>
    </location>
</feature>
<feature type="region of interest" description="Disordered" evidence="2">
    <location>
        <begin position="1"/>
        <end position="23"/>
    </location>
</feature>
<protein>
    <recommendedName>
        <fullName evidence="1">Small ribosomal subunit protein bS20</fullName>
    </recommendedName>
    <alternativeName>
        <fullName evidence="3">30S ribosomal protein S20</fullName>
    </alternativeName>
</protein>
<organism>
    <name type="scientific">Mesorhizobium japonicum (strain LMG 29417 / CECT 9101 / MAFF 303099)</name>
    <name type="common">Mesorhizobium loti (strain MAFF 303099)</name>
    <dbReference type="NCBI Taxonomy" id="266835"/>
    <lineage>
        <taxon>Bacteria</taxon>
        <taxon>Pseudomonadati</taxon>
        <taxon>Pseudomonadota</taxon>
        <taxon>Alphaproteobacteria</taxon>
        <taxon>Hyphomicrobiales</taxon>
        <taxon>Phyllobacteriaceae</taxon>
        <taxon>Mesorhizobium</taxon>
    </lineage>
</organism>
<keyword id="KW-0687">Ribonucleoprotein</keyword>
<keyword id="KW-0689">Ribosomal protein</keyword>
<keyword id="KW-0694">RNA-binding</keyword>
<keyword id="KW-0699">rRNA-binding</keyword>